<protein>
    <recommendedName>
        <fullName evidence="1">Large ribosomal subunit protein uL4</fullName>
    </recommendedName>
    <alternativeName>
        <fullName evidence="3">50S ribosomal protein L4</fullName>
    </alternativeName>
</protein>
<dbReference type="EMBL" id="CP000964">
    <property type="protein sequence ID" value="ACI09066.1"/>
    <property type="molecule type" value="Genomic_DNA"/>
</dbReference>
<dbReference type="SMR" id="B5XN95"/>
<dbReference type="KEGG" id="kpe:KPK_0400"/>
<dbReference type="HOGENOM" id="CLU_041575_5_2_6"/>
<dbReference type="Proteomes" id="UP000001734">
    <property type="component" value="Chromosome"/>
</dbReference>
<dbReference type="GO" id="GO:1990904">
    <property type="term" value="C:ribonucleoprotein complex"/>
    <property type="evidence" value="ECO:0007669"/>
    <property type="project" value="UniProtKB-KW"/>
</dbReference>
<dbReference type="GO" id="GO:0005840">
    <property type="term" value="C:ribosome"/>
    <property type="evidence" value="ECO:0007669"/>
    <property type="project" value="UniProtKB-KW"/>
</dbReference>
<dbReference type="GO" id="GO:0019843">
    <property type="term" value="F:rRNA binding"/>
    <property type="evidence" value="ECO:0007669"/>
    <property type="project" value="UniProtKB-UniRule"/>
</dbReference>
<dbReference type="GO" id="GO:0003735">
    <property type="term" value="F:structural constituent of ribosome"/>
    <property type="evidence" value="ECO:0007669"/>
    <property type="project" value="InterPro"/>
</dbReference>
<dbReference type="GO" id="GO:0006412">
    <property type="term" value="P:translation"/>
    <property type="evidence" value="ECO:0007669"/>
    <property type="project" value="UniProtKB-UniRule"/>
</dbReference>
<dbReference type="FunFam" id="3.40.1370.10:FF:000001">
    <property type="entry name" value="50S ribosomal protein L4"/>
    <property type="match status" value="1"/>
</dbReference>
<dbReference type="Gene3D" id="3.40.1370.10">
    <property type="match status" value="1"/>
</dbReference>
<dbReference type="HAMAP" id="MF_01328_B">
    <property type="entry name" value="Ribosomal_uL4_B"/>
    <property type="match status" value="1"/>
</dbReference>
<dbReference type="InterPro" id="IPR002136">
    <property type="entry name" value="Ribosomal_uL4"/>
</dbReference>
<dbReference type="InterPro" id="IPR013005">
    <property type="entry name" value="Ribosomal_uL4-like"/>
</dbReference>
<dbReference type="InterPro" id="IPR023574">
    <property type="entry name" value="Ribosomal_uL4_dom_sf"/>
</dbReference>
<dbReference type="NCBIfam" id="TIGR03953">
    <property type="entry name" value="rplD_bact"/>
    <property type="match status" value="1"/>
</dbReference>
<dbReference type="PANTHER" id="PTHR10746">
    <property type="entry name" value="50S RIBOSOMAL PROTEIN L4"/>
    <property type="match status" value="1"/>
</dbReference>
<dbReference type="PANTHER" id="PTHR10746:SF6">
    <property type="entry name" value="LARGE RIBOSOMAL SUBUNIT PROTEIN UL4M"/>
    <property type="match status" value="1"/>
</dbReference>
<dbReference type="Pfam" id="PF00573">
    <property type="entry name" value="Ribosomal_L4"/>
    <property type="match status" value="1"/>
</dbReference>
<dbReference type="SUPFAM" id="SSF52166">
    <property type="entry name" value="Ribosomal protein L4"/>
    <property type="match status" value="1"/>
</dbReference>
<reference key="1">
    <citation type="journal article" date="2008" name="PLoS Genet.">
        <title>Complete genome sequence of the N2-fixing broad host range endophyte Klebsiella pneumoniae 342 and virulence predictions verified in mice.</title>
        <authorList>
            <person name="Fouts D.E."/>
            <person name="Tyler H.L."/>
            <person name="DeBoy R.T."/>
            <person name="Daugherty S."/>
            <person name="Ren Q."/>
            <person name="Badger J.H."/>
            <person name="Durkin A.S."/>
            <person name="Huot H."/>
            <person name="Shrivastava S."/>
            <person name="Kothari S."/>
            <person name="Dodson R.J."/>
            <person name="Mohamoud Y."/>
            <person name="Khouri H."/>
            <person name="Roesch L.F.W."/>
            <person name="Krogfelt K.A."/>
            <person name="Struve C."/>
            <person name="Triplett E.W."/>
            <person name="Methe B.A."/>
        </authorList>
    </citation>
    <scope>NUCLEOTIDE SEQUENCE [LARGE SCALE GENOMIC DNA]</scope>
    <source>
        <strain>342</strain>
    </source>
</reference>
<proteinExistence type="inferred from homology"/>
<evidence type="ECO:0000255" key="1">
    <source>
        <dbReference type="HAMAP-Rule" id="MF_01328"/>
    </source>
</evidence>
<evidence type="ECO:0000256" key="2">
    <source>
        <dbReference type="SAM" id="MobiDB-lite"/>
    </source>
</evidence>
<evidence type="ECO:0000305" key="3"/>
<gene>
    <name evidence="1" type="primary">rplD</name>
    <name type="ordered locus">KPK_0400</name>
</gene>
<sequence>MELVLKDAQSALTVSETTFGRDFNEALVHQVVVAYAAGARQGTRAQKTRAEITGSGKKPWRQKGTGRARSGSIKSPIWRSGGVTFAARPQDHSQKVNKKMYRGALKSILSELVRQDRLIVVEKFSVEAPKTKLLAQKLKDMALEDVLIITGELDENLFLAARNLHKVDVRDANGIDPVSLIAFDKVVMTADAVKQVEEMLA</sequence>
<name>RL4_KLEP3</name>
<feature type="chain" id="PRO_1000142138" description="Large ribosomal subunit protein uL4">
    <location>
        <begin position="1"/>
        <end position="201"/>
    </location>
</feature>
<feature type="region of interest" description="Disordered" evidence="2">
    <location>
        <begin position="46"/>
        <end position="71"/>
    </location>
</feature>
<comment type="function">
    <text evidence="1">One of the primary rRNA binding proteins, this protein initially binds near the 5'-end of the 23S rRNA. It is important during the early stages of 50S assembly. It makes multiple contacts with different domains of the 23S rRNA in the assembled 50S subunit and ribosome.</text>
</comment>
<comment type="function">
    <text evidence="1">Forms part of the polypeptide exit tunnel.</text>
</comment>
<comment type="subunit">
    <text evidence="1">Part of the 50S ribosomal subunit.</text>
</comment>
<comment type="similarity">
    <text evidence="1">Belongs to the universal ribosomal protein uL4 family.</text>
</comment>
<organism>
    <name type="scientific">Klebsiella pneumoniae (strain 342)</name>
    <dbReference type="NCBI Taxonomy" id="507522"/>
    <lineage>
        <taxon>Bacteria</taxon>
        <taxon>Pseudomonadati</taxon>
        <taxon>Pseudomonadota</taxon>
        <taxon>Gammaproteobacteria</taxon>
        <taxon>Enterobacterales</taxon>
        <taxon>Enterobacteriaceae</taxon>
        <taxon>Klebsiella/Raoultella group</taxon>
        <taxon>Klebsiella</taxon>
        <taxon>Klebsiella pneumoniae complex</taxon>
    </lineage>
</organism>
<keyword id="KW-0687">Ribonucleoprotein</keyword>
<keyword id="KW-0689">Ribosomal protein</keyword>
<keyword id="KW-0694">RNA-binding</keyword>
<keyword id="KW-0699">rRNA-binding</keyword>
<accession>B5XN95</accession>